<protein>
    <recommendedName>
        <fullName>Putative zinc metalloproteinase YIL108W</fullName>
        <ecNumber>3.4.24.-</ecNumber>
    </recommendedName>
</protein>
<evidence type="ECO:0000250" key="1"/>
<evidence type="ECO:0000255" key="2">
    <source>
        <dbReference type="PROSITE-ProRule" id="PRU01088"/>
    </source>
</evidence>
<evidence type="ECO:0000255" key="3">
    <source>
        <dbReference type="PROSITE-ProRule" id="PRU10095"/>
    </source>
</evidence>
<evidence type="ECO:0000269" key="4">
    <source>
    </source>
</evidence>
<evidence type="ECO:0000269" key="5">
    <source>
    </source>
</evidence>
<evidence type="ECO:0000305" key="6"/>
<evidence type="ECO:0007744" key="7">
    <source>
    </source>
</evidence>
<evidence type="ECO:0007744" key="8">
    <source>
    </source>
</evidence>
<sequence length="696" mass="77414">MVGSKDIDLFNLRENEQIVSPCLIVHGKCNKQNGAKTVQVQHPQLPPITYPIHNQFFKATVILTPGENKLTFVTDTNTARTIVCYYTPLTQNPPVHLCLILAKDSPLQFDSPREQKDREGGNGLELAIKKLRLGARLMQAYTNEQMLRNSMGNRTFPFVEEFTWDTLFERPAMRNTIKIHVVRSEKTVKEIQDPDIAQQNSKGKNTGALFGIAMDALKSYGGPFTNNEKPVQAACMFLDTHWDGKLIRGHAALGGGDDSIKLAIFGSHGLYSWPTCLEQLVPYFTDETRSSTSEVANDCNECGTYWECLTITLGAFMHEIGHLLGCPHQESGVMLRGYTTLNRSFLTKEAYSVRTNSTGASPPIFPKEECTWNRLDTVRFLYHPSFTLPQDYYDPSFMRPTKLGGYPNIKHSVYPLGNGSCRILSPTGIYLIEIICDDLARGHIEYLPVSLGGQGPQREVIVTLDDLRARLPKNELAKFGNTFKLKILSVNAPETEFDKFPSLLDVQPLDMSKYGFSKNVQGIKSPLYGRSDGGNAVGVVAFDVRLVTAVRIYHGYALDGVRFYYKEKPTGTKDAPASKPSVPPRNYFSKITHSIKNHASINEENLKSVLFGHETQNFTDATLEPGEIIIGFNLRCGAWVDAIQIITSHGRMTDMFGNKDGGGFAELQPPNGQYILGVTGRVGQWVDAFGIIYGAL</sequence>
<name>YIK8_YEAST</name>
<proteinExistence type="evidence at protein level"/>
<accession>P40483</accession>
<accession>D6VVH9</accession>
<accession>Q6B2N8</accession>
<feature type="chain" id="PRO_0000078181" description="Putative zinc metalloproteinase YIL108W">
    <location>
        <begin position="1"/>
        <end position="696"/>
    </location>
</feature>
<feature type="domain" description="Jacalin-type lectin" evidence="2">
    <location>
        <begin position="522"/>
        <end position="695"/>
    </location>
</feature>
<feature type="active site" evidence="3">
    <location>
        <position position="319"/>
    </location>
</feature>
<feature type="binding site" evidence="3">
    <location>
        <position position="318"/>
    </location>
    <ligand>
        <name>Zn(2+)</name>
        <dbReference type="ChEBI" id="CHEBI:29105"/>
        <note>catalytic</note>
    </ligand>
</feature>
<feature type="binding site" evidence="3">
    <location>
        <position position="322"/>
    </location>
    <ligand>
        <name>Zn(2+)</name>
        <dbReference type="ChEBI" id="CHEBI:29105"/>
        <note>catalytic</note>
    </ligand>
</feature>
<feature type="binding site" evidence="3">
    <location>
        <position position="328"/>
    </location>
    <ligand>
        <name>Zn(2+)</name>
        <dbReference type="ChEBI" id="CHEBI:29105"/>
        <note>catalytic</note>
    </ligand>
</feature>
<feature type="modified residue" description="Phosphoserine" evidence="7">
    <location>
        <position position="361"/>
    </location>
</feature>
<feature type="cross-link" description="Glycyl lysine isopeptide (Lys-Gly) (interchain with G-Cter in ubiquitin)" evidence="8">
    <location>
        <position position="245"/>
    </location>
</feature>
<feature type="cross-link" description="Glycyl lysine isopeptide (Lys-Gly) (interchain with G-Cter in ubiquitin)" evidence="8">
    <location>
        <position position="478"/>
    </location>
</feature>
<feature type="cross-link" description="Glycyl lysine isopeptide (Lys-Gly) (interchain with G-Cter in ubiquitin)" evidence="8">
    <location>
        <position position="518"/>
    </location>
</feature>
<feature type="cross-link" description="Glycyl lysine isopeptide (Lys-Gly) (interchain with G-Cter in ubiquitin)" evidence="8">
    <location>
        <position position="579"/>
    </location>
</feature>
<feature type="cross-link" description="Glycyl lysine isopeptide (Lys-Gly) (interchain with G-Cter in ubiquitin)" evidence="8">
    <location>
        <position position="590"/>
    </location>
</feature>
<feature type="cross-link" description="Glycyl lysine isopeptide (Lys-Gly) (interchain with G-Cter in ubiquitin)" evidence="8">
    <location>
        <position position="596"/>
    </location>
</feature>
<feature type="sequence conflict" description="In Ref. 3; AAT92711." evidence="6" ref="3">
    <original>L</original>
    <variation>F</variation>
    <location>
        <position position="696"/>
    </location>
</feature>
<keyword id="KW-0963">Cytoplasm</keyword>
<keyword id="KW-0378">Hydrolase</keyword>
<keyword id="KW-1017">Isopeptide bond</keyword>
<keyword id="KW-0479">Metal-binding</keyword>
<keyword id="KW-0482">Metalloprotease</keyword>
<keyword id="KW-0597">Phosphoprotein</keyword>
<keyword id="KW-0645">Protease</keyword>
<keyword id="KW-1185">Reference proteome</keyword>
<keyword id="KW-0832">Ubl conjugation</keyword>
<keyword id="KW-0862">Zinc</keyword>
<reference key="1">
    <citation type="journal article" date="1997" name="Nature">
        <title>The nucleotide sequence of Saccharomyces cerevisiae chromosome IX.</title>
        <authorList>
            <person name="Churcher C.M."/>
            <person name="Bowman S."/>
            <person name="Badcock K."/>
            <person name="Bankier A.T."/>
            <person name="Brown D."/>
            <person name="Chillingworth T."/>
            <person name="Connor R."/>
            <person name="Devlin K."/>
            <person name="Gentles S."/>
            <person name="Hamlin N."/>
            <person name="Harris D.E."/>
            <person name="Horsnell T."/>
            <person name="Hunt S."/>
            <person name="Jagels K."/>
            <person name="Jones M."/>
            <person name="Lye G."/>
            <person name="Moule S."/>
            <person name="Odell C."/>
            <person name="Pearson D."/>
            <person name="Rajandream M.A."/>
            <person name="Rice P."/>
            <person name="Rowley N."/>
            <person name="Skelton J."/>
            <person name="Smith V."/>
            <person name="Walsh S.V."/>
            <person name="Whitehead S."/>
            <person name="Barrell B.G."/>
        </authorList>
    </citation>
    <scope>NUCLEOTIDE SEQUENCE [LARGE SCALE GENOMIC DNA]</scope>
    <source>
        <strain>ATCC 204508 / S288c</strain>
    </source>
</reference>
<reference key="2">
    <citation type="journal article" date="2014" name="G3 (Bethesda)">
        <title>The reference genome sequence of Saccharomyces cerevisiae: Then and now.</title>
        <authorList>
            <person name="Engel S.R."/>
            <person name="Dietrich F.S."/>
            <person name="Fisk D.G."/>
            <person name="Binkley G."/>
            <person name="Balakrishnan R."/>
            <person name="Costanzo M.C."/>
            <person name="Dwight S.S."/>
            <person name="Hitz B.C."/>
            <person name="Karra K."/>
            <person name="Nash R.S."/>
            <person name="Weng S."/>
            <person name="Wong E.D."/>
            <person name="Lloyd P."/>
            <person name="Skrzypek M.S."/>
            <person name="Miyasato S.R."/>
            <person name="Simison M."/>
            <person name="Cherry J.M."/>
        </authorList>
    </citation>
    <scope>GENOME REANNOTATION</scope>
    <source>
        <strain>ATCC 204508 / S288c</strain>
    </source>
</reference>
<reference key="3">
    <citation type="journal article" date="2007" name="Genome Res.">
        <title>Approaching a complete repository of sequence-verified protein-encoding clones for Saccharomyces cerevisiae.</title>
        <authorList>
            <person name="Hu Y."/>
            <person name="Rolfs A."/>
            <person name="Bhullar B."/>
            <person name="Murthy T.V.S."/>
            <person name="Zhu C."/>
            <person name="Berger M.F."/>
            <person name="Camargo A.A."/>
            <person name="Kelley F."/>
            <person name="McCarron S."/>
            <person name="Jepson D."/>
            <person name="Richardson A."/>
            <person name="Raphael J."/>
            <person name="Moreira D."/>
            <person name="Taycher E."/>
            <person name="Zuo D."/>
            <person name="Mohr S."/>
            <person name="Kane M.F."/>
            <person name="Williamson J."/>
            <person name="Simpson A.J.G."/>
            <person name="Bulyk M.L."/>
            <person name="Harlow E."/>
            <person name="Marsischky G."/>
            <person name="Kolodner R.D."/>
            <person name="LaBaer J."/>
        </authorList>
    </citation>
    <scope>NUCLEOTIDE SEQUENCE [GENOMIC DNA]</scope>
    <source>
        <strain>ATCC 204508 / S288c</strain>
    </source>
</reference>
<reference key="4">
    <citation type="journal article" date="2003" name="Nature">
        <title>Global analysis of protein localization in budding yeast.</title>
        <authorList>
            <person name="Huh W.-K."/>
            <person name="Falvo J.V."/>
            <person name="Gerke L.C."/>
            <person name="Carroll A.S."/>
            <person name="Howson R.W."/>
            <person name="Weissman J.S."/>
            <person name="O'Shea E.K."/>
        </authorList>
    </citation>
    <scope>SUBCELLULAR LOCATION [LARGE SCALE ANALYSIS]</scope>
</reference>
<reference key="5">
    <citation type="journal article" date="2003" name="Nature">
        <title>Global analysis of protein expression in yeast.</title>
        <authorList>
            <person name="Ghaemmaghami S."/>
            <person name="Huh W.-K."/>
            <person name="Bower K."/>
            <person name="Howson R.W."/>
            <person name="Belle A."/>
            <person name="Dephoure N."/>
            <person name="O'Shea E.K."/>
            <person name="Weissman J.S."/>
        </authorList>
    </citation>
    <scope>LEVEL OF PROTEIN EXPRESSION [LARGE SCALE ANALYSIS]</scope>
</reference>
<reference key="6">
    <citation type="journal article" date="2008" name="Mol. Cell. Proteomics">
        <title>A multidimensional chromatography technology for in-depth phosphoproteome analysis.</title>
        <authorList>
            <person name="Albuquerque C.P."/>
            <person name="Smolka M.B."/>
            <person name="Payne S.H."/>
            <person name="Bafna V."/>
            <person name="Eng J."/>
            <person name="Zhou H."/>
        </authorList>
    </citation>
    <scope>PHOSPHORYLATION [LARGE SCALE ANALYSIS] AT SER-361</scope>
    <scope>IDENTIFICATION BY MASS SPECTROMETRY [LARGE SCALE ANALYSIS]</scope>
</reference>
<reference key="7">
    <citation type="journal article" date="2012" name="Proc. Natl. Acad. Sci. U.S.A.">
        <title>N-terminal acetylome analyses and functional insights of the N-terminal acetyltransferase NatB.</title>
        <authorList>
            <person name="Van Damme P."/>
            <person name="Lasa M."/>
            <person name="Polevoda B."/>
            <person name="Gazquez C."/>
            <person name="Elosegui-Artola A."/>
            <person name="Kim D.S."/>
            <person name="De Juan-Pardo E."/>
            <person name="Demeyer K."/>
            <person name="Hole K."/>
            <person name="Larrea E."/>
            <person name="Timmerman E."/>
            <person name="Prieto J."/>
            <person name="Arnesen T."/>
            <person name="Sherman F."/>
            <person name="Gevaert K."/>
            <person name="Aldabe R."/>
        </authorList>
    </citation>
    <scope>IDENTIFICATION BY MASS SPECTROMETRY [LARGE SCALE ANALYSIS]</scope>
</reference>
<reference key="8">
    <citation type="journal article" date="2012" name="Proteomics">
        <title>Sites of ubiquitin attachment in Saccharomyces cerevisiae.</title>
        <authorList>
            <person name="Starita L.M."/>
            <person name="Lo R.S."/>
            <person name="Eng J.K."/>
            <person name="von Haller P.D."/>
            <person name="Fields S."/>
        </authorList>
    </citation>
    <scope>UBIQUITINATION [LARGE SCALE ANALYSIS] AT LYS-245; LYS-478; LYS-518; LYS-579; LYS-590 AND LYS-596</scope>
    <scope>IDENTIFICATION BY MASS SPECTROMETRY [LARGE SCALE ANALYSIS]</scope>
</reference>
<gene>
    <name type="ordered locus">YIL108W</name>
</gene>
<organism>
    <name type="scientific">Saccharomyces cerevisiae (strain ATCC 204508 / S288c)</name>
    <name type="common">Baker's yeast</name>
    <dbReference type="NCBI Taxonomy" id="559292"/>
    <lineage>
        <taxon>Eukaryota</taxon>
        <taxon>Fungi</taxon>
        <taxon>Dikarya</taxon>
        <taxon>Ascomycota</taxon>
        <taxon>Saccharomycotina</taxon>
        <taxon>Saccharomycetes</taxon>
        <taxon>Saccharomycetales</taxon>
        <taxon>Saccharomycetaceae</taxon>
        <taxon>Saccharomyces</taxon>
    </lineage>
</organism>
<comment type="cofactor">
    <cofactor evidence="1">
        <name>Zn(2+)</name>
        <dbReference type="ChEBI" id="CHEBI:29105"/>
    </cofactor>
    <text evidence="1">Binds 1 zinc ion.</text>
</comment>
<comment type="interaction">
    <interactant intactId="EBI-25176">
        <id>P40483</id>
    </interactant>
    <interactant intactId="EBI-35523">
        <id>Q06449</id>
        <label>PIN3</label>
    </interactant>
    <organismsDiffer>false</organismsDiffer>
    <experiments>3</experiments>
</comment>
<comment type="subcellular location">
    <subcellularLocation>
        <location evidence="4">Cytoplasm</location>
    </subcellularLocation>
</comment>
<comment type="miscellaneous">
    <text evidence="5">Present with 195 molecules/cell in log phase SD medium.</text>
</comment>
<comment type="similarity">
    <text evidence="6">Belongs to the peptidase M10B family.</text>
</comment>
<dbReference type="EC" id="3.4.24.-"/>
<dbReference type="EMBL" id="Z38125">
    <property type="protein sequence ID" value="CAA86272.1"/>
    <property type="molecule type" value="Genomic_DNA"/>
</dbReference>
<dbReference type="EMBL" id="AY692692">
    <property type="protein sequence ID" value="AAT92711.1"/>
    <property type="molecule type" value="Genomic_DNA"/>
</dbReference>
<dbReference type="EMBL" id="BK006942">
    <property type="protein sequence ID" value="DAA08445.1"/>
    <property type="molecule type" value="Genomic_DNA"/>
</dbReference>
<dbReference type="PIR" id="S48464">
    <property type="entry name" value="S48464"/>
</dbReference>
<dbReference type="RefSeq" id="NP_012158.1">
    <property type="nucleotide sequence ID" value="NM_001179456.1"/>
</dbReference>
<dbReference type="SMR" id="P40483"/>
<dbReference type="BioGRID" id="34883">
    <property type="interactions" value="51"/>
</dbReference>
<dbReference type="DIP" id="DIP-5657N"/>
<dbReference type="FunCoup" id="P40483">
    <property type="interactions" value="80"/>
</dbReference>
<dbReference type="IntAct" id="P40483">
    <property type="interactions" value="11"/>
</dbReference>
<dbReference type="MINT" id="P40483"/>
<dbReference type="STRING" id="4932.YIL108W"/>
<dbReference type="iPTMnet" id="P40483"/>
<dbReference type="PaxDb" id="4932-YIL108W"/>
<dbReference type="PeptideAtlas" id="P40483"/>
<dbReference type="EnsemblFungi" id="YIL108W_mRNA">
    <property type="protein sequence ID" value="YIL108W"/>
    <property type="gene ID" value="YIL108W"/>
</dbReference>
<dbReference type="GeneID" id="854698"/>
<dbReference type="KEGG" id="sce:YIL108W"/>
<dbReference type="AGR" id="SGD:S000001370"/>
<dbReference type="SGD" id="S000001370">
    <property type="gene designation" value="YIL108W"/>
</dbReference>
<dbReference type="VEuPathDB" id="FungiDB:YIL108W"/>
<dbReference type="eggNOG" id="KOG4525">
    <property type="taxonomic scope" value="Eukaryota"/>
</dbReference>
<dbReference type="GeneTree" id="ENSGT00730000114706"/>
<dbReference type="HOGENOM" id="CLU_009601_2_1_1"/>
<dbReference type="InParanoid" id="P40483"/>
<dbReference type="OMA" id="MFRNNFG"/>
<dbReference type="OrthoDB" id="74460at2759"/>
<dbReference type="BioCyc" id="YEAST:G3O-31363-MONOMER"/>
<dbReference type="BioGRID-ORCS" id="854698">
    <property type="hits" value="1 hit in 10 CRISPR screens"/>
</dbReference>
<dbReference type="PRO" id="PR:P40483"/>
<dbReference type="Proteomes" id="UP000002311">
    <property type="component" value="Chromosome IX"/>
</dbReference>
<dbReference type="RNAct" id="P40483">
    <property type="molecule type" value="protein"/>
</dbReference>
<dbReference type="GO" id="GO:0005737">
    <property type="term" value="C:cytoplasm"/>
    <property type="evidence" value="ECO:0007005"/>
    <property type="project" value="SGD"/>
</dbReference>
<dbReference type="GO" id="GO:0046872">
    <property type="term" value="F:metal ion binding"/>
    <property type="evidence" value="ECO:0007669"/>
    <property type="project" value="UniProtKB-KW"/>
</dbReference>
<dbReference type="GO" id="GO:0008237">
    <property type="term" value="F:metallopeptidase activity"/>
    <property type="evidence" value="ECO:0007669"/>
    <property type="project" value="UniProtKB-KW"/>
</dbReference>
<dbReference type="GO" id="GO:0006508">
    <property type="term" value="P:proteolysis"/>
    <property type="evidence" value="ECO:0007669"/>
    <property type="project" value="UniProtKB-KW"/>
</dbReference>
<dbReference type="CDD" id="cd09613">
    <property type="entry name" value="Jacalin_metallopeptidase_like"/>
    <property type="match status" value="1"/>
</dbReference>
<dbReference type="Gene3D" id="2.100.10.30">
    <property type="entry name" value="Jacalin-like lectin domain"/>
    <property type="match status" value="1"/>
</dbReference>
<dbReference type="InterPro" id="IPR001229">
    <property type="entry name" value="Jacalin-like_lectin_dom"/>
</dbReference>
<dbReference type="InterPro" id="IPR036404">
    <property type="entry name" value="Jacalin-like_lectin_dom_sf"/>
</dbReference>
<dbReference type="InterPro" id="IPR033862">
    <property type="entry name" value="Jacalin-like_metallopeptidase"/>
</dbReference>
<dbReference type="InterPro" id="IPR053002">
    <property type="entry name" value="Metalloproteinase_M10B"/>
</dbReference>
<dbReference type="InterPro" id="IPR021917">
    <property type="entry name" value="Unchr_Zn-peptidase-like"/>
</dbReference>
<dbReference type="PANTHER" id="PTHR21054:SF2">
    <property type="entry name" value="MIP04191P"/>
    <property type="match status" value="1"/>
</dbReference>
<dbReference type="PANTHER" id="PTHR21054">
    <property type="entry name" value="ZINC METALLOPROTEINASE-RELATED"/>
    <property type="match status" value="1"/>
</dbReference>
<dbReference type="Pfam" id="PF01419">
    <property type="entry name" value="Jacalin"/>
    <property type="match status" value="1"/>
</dbReference>
<dbReference type="Pfam" id="PF12044">
    <property type="entry name" value="Metallopep"/>
    <property type="match status" value="1"/>
</dbReference>
<dbReference type="SUPFAM" id="SSF51101">
    <property type="entry name" value="Mannose-binding lectins"/>
    <property type="match status" value="1"/>
</dbReference>
<dbReference type="SUPFAM" id="SSF55486">
    <property type="entry name" value="Metalloproteases ('zincins'), catalytic domain"/>
    <property type="match status" value="1"/>
</dbReference>
<dbReference type="PROSITE" id="PS51752">
    <property type="entry name" value="JACALIN_LECTIN"/>
    <property type="match status" value="1"/>
</dbReference>
<dbReference type="PROSITE" id="PS00142">
    <property type="entry name" value="ZINC_PROTEASE"/>
    <property type="match status" value="1"/>
</dbReference>